<sequence>MTSQSIMLLVAFLGVLLALAYPLGLFMAKVGDGTAIRGLGWLLKMENALYRLAGLDTQSAMSWKSYAIALLVFNTLGALFVYAVQRLQAWLPLNPQAFGNVSPDSSFNTAVSFVSNTNWQGYGGESTMSYLTQMLALTGQNFFSAATGIAVAFALIRGFSSRSAKSIGNFWVDLTRSTLYILLPLAIVVSVALMGQGVIQNFSAYQDVALVDPVTYQQAKTTADGQPVVDAEGKPVMETLTAKMQTIAMGPVASQEAIKMLGTNGGGFFNANSAHPYENPTVFSNFIEMLAIFLIPAGLCFTFGRMVGDMRQGWAVLGAMTLIFVVMTSIVMTSEQSAHPAMQALGVDQTTTALQSGGNMEGKETRFGISASALFTAVTTAASCGAVNNMHDSLMPMGGFVPLVLMQFGEVVFGGVGTGLYGMLIFAILSVFIAGLMIGRTPEYLGKKIQSYEMKMASIAILVTPTLVLVGTAIAVLVESGKVGIANPGAHGFSEILYAFTSAANNNGSAFAGLSANTPFYNTMLAIAMWFGRFAMIVPILAIAGSLACKQRLAANAGTMPTHGPLFVALLVGVVVLVGVLNYVPALALGPIVEHLQLFSH</sequence>
<organism>
    <name type="scientific">Herminiimonas arsenicoxydans</name>
    <dbReference type="NCBI Taxonomy" id="204773"/>
    <lineage>
        <taxon>Bacteria</taxon>
        <taxon>Pseudomonadati</taxon>
        <taxon>Pseudomonadota</taxon>
        <taxon>Betaproteobacteria</taxon>
        <taxon>Burkholderiales</taxon>
        <taxon>Oxalobacteraceae</taxon>
        <taxon>Herminiimonas</taxon>
    </lineage>
</organism>
<gene>
    <name evidence="1" type="primary">kdpA</name>
    <name type="ordered locus">HEAR1626</name>
</gene>
<comment type="function">
    <text evidence="1">Part of the high-affinity ATP-driven potassium transport (or Kdp) system, which catalyzes the hydrolysis of ATP coupled with the electrogenic transport of potassium into the cytoplasm. This subunit binds the periplasmic potassium ions and delivers the ions to the membrane domain of KdpB through an intramembrane tunnel.</text>
</comment>
<comment type="subunit">
    <text evidence="1">The system is composed of three essential subunits: KdpA, KdpB and KdpC.</text>
</comment>
<comment type="subcellular location">
    <subcellularLocation>
        <location evidence="1">Cell inner membrane</location>
        <topology evidence="1">Multi-pass membrane protein</topology>
    </subcellularLocation>
</comment>
<comment type="similarity">
    <text evidence="1">Belongs to the KdpA family.</text>
</comment>
<proteinExistence type="inferred from homology"/>
<evidence type="ECO:0000255" key="1">
    <source>
        <dbReference type="HAMAP-Rule" id="MF_00275"/>
    </source>
</evidence>
<name>KDPA_HERAR</name>
<dbReference type="EMBL" id="CU207211">
    <property type="protein sequence ID" value="CAL61786.1"/>
    <property type="molecule type" value="Genomic_DNA"/>
</dbReference>
<dbReference type="SMR" id="A4G5J9"/>
<dbReference type="STRING" id="204773.HEAR1626"/>
<dbReference type="KEGG" id="har:HEAR1626"/>
<dbReference type="eggNOG" id="COG2060">
    <property type="taxonomic scope" value="Bacteria"/>
</dbReference>
<dbReference type="HOGENOM" id="CLU_018614_3_0_4"/>
<dbReference type="OrthoDB" id="9763796at2"/>
<dbReference type="Proteomes" id="UP000006697">
    <property type="component" value="Chromosome"/>
</dbReference>
<dbReference type="GO" id="GO:0005886">
    <property type="term" value="C:plasma membrane"/>
    <property type="evidence" value="ECO:0007669"/>
    <property type="project" value="UniProtKB-SubCell"/>
</dbReference>
<dbReference type="GO" id="GO:0008556">
    <property type="term" value="F:P-type potassium transmembrane transporter activity"/>
    <property type="evidence" value="ECO:0007669"/>
    <property type="project" value="InterPro"/>
</dbReference>
<dbReference type="GO" id="GO:0030955">
    <property type="term" value="F:potassium ion binding"/>
    <property type="evidence" value="ECO:0007669"/>
    <property type="project" value="UniProtKB-UniRule"/>
</dbReference>
<dbReference type="HAMAP" id="MF_00275">
    <property type="entry name" value="KdpA"/>
    <property type="match status" value="1"/>
</dbReference>
<dbReference type="InterPro" id="IPR004623">
    <property type="entry name" value="KdpA"/>
</dbReference>
<dbReference type="NCBIfam" id="TIGR00680">
    <property type="entry name" value="kdpA"/>
    <property type="match status" value="1"/>
</dbReference>
<dbReference type="PANTHER" id="PTHR30607">
    <property type="entry name" value="POTASSIUM-TRANSPORTING ATPASE A CHAIN"/>
    <property type="match status" value="1"/>
</dbReference>
<dbReference type="PANTHER" id="PTHR30607:SF2">
    <property type="entry name" value="POTASSIUM-TRANSPORTING ATPASE POTASSIUM-BINDING SUBUNIT"/>
    <property type="match status" value="1"/>
</dbReference>
<dbReference type="Pfam" id="PF03814">
    <property type="entry name" value="KdpA"/>
    <property type="match status" value="1"/>
</dbReference>
<dbReference type="PIRSF" id="PIRSF001294">
    <property type="entry name" value="K_ATPaseA"/>
    <property type="match status" value="1"/>
</dbReference>
<protein>
    <recommendedName>
        <fullName evidence="1">Potassium-transporting ATPase potassium-binding subunit</fullName>
    </recommendedName>
    <alternativeName>
        <fullName evidence="1">ATP phosphohydrolase [potassium-transporting] A chain</fullName>
    </alternativeName>
    <alternativeName>
        <fullName evidence="1">Potassium-binding and translocating subunit A</fullName>
    </alternativeName>
    <alternativeName>
        <fullName evidence="1">Potassium-translocating ATPase A chain</fullName>
    </alternativeName>
</protein>
<feature type="chain" id="PRO_1000022225" description="Potassium-transporting ATPase potassium-binding subunit">
    <location>
        <begin position="1"/>
        <end position="601"/>
    </location>
</feature>
<feature type="transmembrane region" description="Helical" evidence="1">
    <location>
        <begin position="6"/>
        <end position="26"/>
    </location>
</feature>
<feature type="transmembrane region" description="Helical" evidence="1">
    <location>
        <begin position="65"/>
        <end position="85"/>
    </location>
</feature>
<feature type="transmembrane region" description="Helical" evidence="1">
    <location>
        <begin position="136"/>
        <end position="156"/>
    </location>
</feature>
<feature type="transmembrane region" description="Helical" evidence="1">
    <location>
        <begin position="179"/>
        <end position="199"/>
    </location>
</feature>
<feature type="transmembrane region" description="Helical" evidence="1">
    <location>
        <begin position="283"/>
        <end position="303"/>
    </location>
</feature>
<feature type="transmembrane region" description="Helical" evidence="1">
    <location>
        <begin position="313"/>
        <end position="333"/>
    </location>
</feature>
<feature type="transmembrane region" description="Helical" evidence="1">
    <location>
        <begin position="367"/>
        <end position="387"/>
    </location>
</feature>
<feature type="transmembrane region" description="Helical" evidence="1">
    <location>
        <begin position="397"/>
        <end position="417"/>
    </location>
</feature>
<feature type="transmembrane region" description="Helical" evidence="1">
    <location>
        <begin position="419"/>
        <end position="439"/>
    </location>
</feature>
<feature type="transmembrane region" description="Helical" evidence="1">
    <location>
        <begin position="458"/>
        <end position="478"/>
    </location>
</feature>
<feature type="transmembrane region" description="Helical" evidence="1">
    <location>
        <begin position="524"/>
        <end position="544"/>
    </location>
</feature>
<feature type="transmembrane region" description="Helical" evidence="1">
    <location>
        <begin position="566"/>
        <end position="586"/>
    </location>
</feature>
<keyword id="KW-0997">Cell inner membrane</keyword>
<keyword id="KW-1003">Cell membrane</keyword>
<keyword id="KW-0406">Ion transport</keyword>
<keyword id="KW-0472">Membrane</keyword>
<keyword id="KW-0630">Potassium</keyword>
<keyword id="KW-0633">Potassium transport</keyword>
<keyword id="KW-1185">Reference proteome</keyword>
<keyword id="KW-0812">Transmembrane</keyword>
<keyword id="KW-1133">Transmembrane helix</keyword>
<keyword id="KW-0813">Transport</keyword>
<accession>A4G5J9</accession>
<reference key="1">
    <citation type="journal article" date="2007" name="PLoS Genet.">
        <title>A tale of two oxidation states: bacterial colonization of arsenic-rich environments.</title>
        <authorList>
            <person name="Muller D."/>
            <person name="Medigue C."/>
            <person name="Koechler S."/>
            <person name="Barbe V."/>
            <person name="Barakat M."/>
            <person name="Talla E."/>
            <person name="Bonnefoy V."/>
            <person name="Krin E."/>
            <person name="Arsene-Ploetze F."/>
            <person name="Carapito C."/>
            <person name="Chandler M."/>
            <person name="Cournoyer B."/>
            <person name="Cruveiller S."/>
            <person name="Dossat C."/>
            <person name="Duval S."/>
            <person name="Heymann M."/>
            <person name="Leize E."/>
            <person name="Lieutaud A."/>
            <person name="Lievremont D."/>
            <person name="Makita Y."/>
            <person name="Mangenot S."/>
            <person name="Nitschke W."/>
            <person name="Ortet P."/>
            <person name="Perdrial N."/>
            <person name="Schoepp B."/>
            <person name="Siguier P."/>
            <person name="Simeonova D.D."/>
            <person name="Rouy Z."/>
            <person name="Segurens B."/>
            <person name="Turlin E."/>
            <person name="Vallenet D."/>
            <person name="van Dorsselaer A."/>
            <person name="Weiss S."/>
            <person name="Weissenbach J."/>
            <person name="Lett M.-C."/>
            <person name="Danchin A."/>
            <person name="Bertin P.N."/>
        </authorList>
    </citation>
    <scope>NUCLEOTIDE SEQUENCE [LARGE SCALE GENOMIC DNA]</scope>
    <source>
        <strain>ULPAs1</strain>
    </source>
</reference>